<keyword id="KW-0067">ATP-binding</keyword>
<keyword id="KW-0133">Cell shape</keyword>
<keyword id="KW-0961">Cell wall biogenesis/degradation</keyword>
<keyword id="KW-0963">Cytoplasm</keyword>
<keyword id="KW-0436">Ligase</keyword>
<keyword id="KW-0460">Magnesium</keyword>
<keyword id="KW-0464">Manganese</keyword>
<keyword id="KW-0479">Metal-binding</keyword>
<keyword id="KW-0547">Nucleotide-binding</keyword>
<keyword id="KW-0573">Peptidoglycan synthesis</keyword>
<sequence length="361" mass="40391">MTDKIKVGLIFGGNSSEYEVSIMSAHNIYEEIDTNKFDVYPMWITNDGYLADDADSRKVLDNPKMEVANPHKVANISNIIELKDRPEIDVFFPIVHGNLGEDGCLQGLFRVLDKPFVGDDVLAAAVTMDKEMTKILAQRAGVPVAKWIAVKRFEYNDPDNEKLDYEYVASQLGSDLFVKPSNQGSSVGVSHVTNEKEYKVALAEAFKYDDKVLVEETVHGTEVETAVLGNDKPIVAGVGQIINAKDSFYTYENKYDDDSTSTLEIPAKLPEGIVETVRKNALKVFQATECSGLARIDSMLRSEDNEVVLTEVNALPGFTNISMYPKLFEEIGIPYTDLITKLIDYAMERYDHKKTLLHKHD</sequence>
<name>DDL_LACJO</name>
<accession>Q74LS5</accession>
<protein>
    <recommendedName>
        <fullName evidence="2">D-alanine--D-alanine ligase</fullName>
        <ecNumber evidence="2">6.3.2.4</ecNumber>
    </recommendedName>
    <alternativeName>
        <fullName evidence="2">D-Ala-D-Ala ligase</fullName>
    </alternativeName>
    <alternativeName>
        <fullName evidence="2">D-alanylalanine synthetase</fullName>
    </alternativeName>
</protein>
<proteinExistence type="inferred from homology"/>
<dbReference type="EC" id="6.3.2.4" evidence="2"/>
<dbReference type="EMBL" id="AE017198">
    <property type="protein sequence ID" value="AAS08090.1"/>
    <property type="molecule type" value="Genomic_DNA"/>
</dbReference>
<dbReference type="RefSeq" id="WP_004898551.1">
    <property type="nucleotide sequence ID" value="NC_005362.1"/>
</dbReference>
<dbReference type="SMR" id="Q74LS5"/>
<dbReference type="GeneID" id="83569561"/>
<dbReference type="KEGG" id="ljo:LJ_0108"/>
<dbReference type="eggNOG" id="COG1181">
    <property type="taxonomic scope" value="Bacteria"/>
</dbReference>
<dbReference type="HOGENOM" id="CLU_039268_0_0_9"/>
<dbReference type="UniPathway" id="UPA00219"/>
<dbReference type="Proteomes" id="UP000000581">
    <property type="component" value="Chromosome"/>
</dbReference>
<dbReference type="GO" id="GO:0005829">
    <property type="term" value="C:cytosol"/>
    <property type="evidence" value="ECO:0007669"/>
    <property type="project" value="TreeGrafter"/>
</dbReference>
<dbReference type="GO" id="GO:0005524">
    <property type="term" value="F:ATP binding"/>
    <property type="evidence" value="ECO:0007669"/>
    <property type="project" value="UniProtKB-KW"/>
</dbReference>
<dbReference type="GO" id="GO:0008716">
    <property type="term" value="F:D-alanine-D-alanine ligase activity"/>
    <property type="evidence" value="ECO:0007669"/>
    <property type="project" value="UniProtKB-UniRule"/>
</dbReference>
<dbReference type="GO" id="GO:0046872">
    <property type="term" value="F:metal ion binding"/>
    <property type="evidence" value="ECO:0007669"/>
    <property type="project" value="UniProtKB-KW"/>
</dbReference>
<dbReference type="GO" id="GO:0071555">
    <property type="term" value="P:cell wall organization"/>
    <property type="evidence" value="ECO:0007669"/>
    <property type="project" value="UniProtKB-KW"/>
</dbReference>
<dbReference type="GO" id="GO:0009252">
    <property type="term" value="P:peptidoglycan biosynthetic process"/>
    <property type="evidence" value="ECO:0007669"/>
    <property type="project" value="UniProtKB-UniRule"/>
</dbReference>
<dbReference type="GO" id="GO:0008360">
    <property type="term" value="P:regulation of cell shape"/>
    <property type="evidence" value="ECO:0007669"/>
    <property type="project" value="UniProtKB-KW"/>
</dbReference>
<dbReference type="FunFam" id="3.30.1490.20:FF:000007">
    <property type="entry name" value="D-alanine--D-alanine ligase"/>
    <property type="match status" value="1"/>
</dbReference>
<dbReference type="FunFam" id="3.30.470.20:FF:000008">
    <property type="entry name" value="D-alanine--D-alanine ligase"/>
    <property type="match status" value="1"/>
</dbReference>
<dbReference type="Gene3D" id="3.40.50.20">
    <property type="match status" value="1"/>
</dbReference>
<dbReference type="Gene3D" id="3.30.1490.20">
    <property type="entry name" value="ATP-grasp fold, A domain"/>
    <property type="match status" value="1"/>
</dbReference>
<dbReference type="Gene3D" id="3.30.470.20">
    <property type="entry name" value="ATP-grasp fold, B domain"/>
    <property type="match status" value="1"/>
</dbReference>
<dbReference type="HAMAP" id="MF_00047">
    <property type="entry name" value="Dala_Dala_lig"/>
    <property type="match status" value="1"/>
</dbReference>
<dbReference type="InterPro" id="IPR011761">
    <property type="entry name" value="ATP-grasp"/>
</dbReference>
<dbReference type="InterPro" id="IPR013815">
    <property type="entry name" value="ATP_grasp_subdomain_1"/>
</dbReference>
<dbReference type="InterPro" id="IPR000291">
    <property type="entry name" value="D-Ala_lig_Van_CS"/>
</dbReference>
<dbReference type="InterPro" id="IPR005905">
    <property type="entry name" value="D_ala_D_ala"/>
</dbReference>
<dbReference type="InterPro" id="IPR011095">
    <property type="entry name" value="Dala_Dala_lig_C"/>
</dbReference>
<dbReference type="InterPro" id="IPR011127">
    <property type="entry name" value="Dala_Dala_lig_N"/>
</dbReference>
<dbReference type="InterPro" id="IPR016185">
    <property type="entry name" value="PreATP-grasp_dom_sf"/>
</dbReference>
<dbReference type="NCBIfam" id="TIGR01205">
    <property type="entry name" value="D_ala_D_alaTIGR"/>
    <property type="match status" value="1"/>
</dbReference>
<dbReference type="NCBIfam" id="NF002528">
    <property type="entry name" value="PRK01966.1-4"/>
    <property type="match status" value="1"/>
</dbReference>
<dbReference type="PANTHER" id="PTHR23132">
    <property type="entry name" value="D-ALANINE--D-ALANINE LIGASE"/>
    <property type="match status" value="1"/>
</dbReference>
<dbReference type="PANTHER" id="PTHR23132:SF25">
    <property type="entry name" value="D-ALANINE--D-ALANINE LIGASE A"/>
    <property type="match status" value="1"/>
</dbReference>
<dbReference type="Pfam" id="PF07478">
    <property type="entry name" value="Dala_Dala_lig_C"/>
    <property type="match status" value="1"/>
</dbReference>
<dbReference type="Pfam" id="PF01820">
    <property type="entry name" value="Dala_Dala_lig_N"/>
    <property type="match status" value="1"/>
</dbReference>
<dbReference type="PIRSF" id="PIRSF039102">
    <property type="entry name" value="Ddl/VanB"/>
    <property type="match status" value="1"/>
</dbReference>
<dbReference type="SUPFAM" id="SSF56059">
    <property type="entry name" value="Glutathione synthetase ATP-binding domain-like"/>
    <property type="match status" value="1"/>
</dbReference>
<dbReference type="SUPFAM" id="SSF52440">
    <property type="entry name" value="PreATP-grasp domain"/>
    <property type="match status" value="1"/>
</dbReference>
<dbReference type="PROSITE" id="PS50975">
    <property type="entry name" value="ATP_GRASP"/>
    <property type="match status" value="1"/>
</dbReference>
<dbReference type="PROSITE" id="PS00843">
    <property type="entry name" value="DALA_DALA_LIGASE_1"/>
    <property type="match status" value="1"/>
</dbReference>
<comment type="function">
    <text evidence="2">Cell wall formation.</text>
</comment>
<comment type="catalytic activity">
    <reaction evidence="2">
        <text>2 D-alanine + ATP = D-alanyl-D-alanine + ADP + phosphate + H(+)</text>
        <dbReference type="Rhea" id="RHEA:11224"/>
        <dbReference type="ChEBI" id="CHEBI:15378"/>
        <dbReference type="ChEBI" id="CHEBI:30616"/>
        <dbReference type="ChEBI" id="CHEBI:43474"/>
        <dbReference type="ChEBI" id="CHEBI:57416"/>
        <dbReference type="ChEBI" id="CHEBI:57822"/>
        <dbReference type="ChEBI" id="CHEBI:456216"/>
        <dbReference type="EC" id="6.3.2.4"/>
    </reaction>
</comment>
<comment type="cofactor">
    <cofactor evidence="1">
        <name>Mg(2+)</name>
        <dbReference type="ChEBI" id="CHEBI:18420"/>
    </cofactor>
    <cofactor evidence="1">
        <name>Mn(2+)</name>
        <dbReference type="ChEBI" id="CHEBI:29035"/>
    </cofactor>
    <text evidence="1">Binds 2 magnesium or manganese ions per subunit.</text>
</comment>
<comment type="pathway">
    <text evidence="2">Cell wall biogenesis; peptidoglycan biosynthesis.</text>
</comment>
<comment type="subcellular location">
    <subcellularLocation>
        <location evidence="2">Cytoplasm</location>
    </subcellularLocation>
</comment>
<comment type="similarity">
    <text evidence="2">Belongs to the D-alanine--D-alanine ligase family.</text>
</comment>
<gene>
    <name evidence="2" type="primary">ddl</name>
    <name type="ordered locus">LJ_0108</name>
</gene>
<reference key="1">
    <citation type="journal article" date="2004" name="Proc. Natl. Acad. Sci. U.S.A.">
        <title>The genome sequence of the probiotic intestinal bacterium Lactobacillus johnsonii NCC 533.</title>
        <authorList>
            <person name="Pridmore R.D."/>
            <person name="Berger B."/>
            <person name="Desiere F."/>
            <person name="Vilanova D."/>
            <person name="Barretto C."/>
            <person name="Pittet A.-C."/>
            <person name="Zwahlen M.-C."/>
            <person name="Rouvet M."/>
            <person name="Altermann E."/>
            <person name="Barrangou R."/>
            <person name="Mollet B."/>
            <person name="Mercenier A."/>
            <person name="Klaenhammer T."/>
            <person name="Arigoni F."/>
            <person name="Schell M.A."/>
        </authorList>
    </citation>
    <scope>NUCLEOTIDE SEQUENCE [LARGE SCALE GENOMIC DNA]</scope>
    <source>
        <strain>CNCM I-1225 / La1 / NCC 533</strain>
    </source>
</reference>
<feature type="chain" id="PRO_0000341121" description="D-alanine--D-alanine ligase">
    <location>
        <begin position="1"/>
        <end position="361"/>
    </location>
</feature>
<feature type="domain" description="ATP-grasp" evidence="2">
    <location>
        <begin position="134"/>
        <end position="344"/>
    </location>
</feature>
<feature type="binding site" evidence="2">
    <location>
        <begin position="169"/>
        <end position="224"/>
    </location>
    <ligand>
        <name>ATP</name>
        <dbReference type="ChEBI" id="CHEBI:30616"/>
    </ligand>
</feature>
<feature type="binding site" evidence="2">
    <location>
        <position position="297"/>
    </location>
    <ligand>
        <name>Mg(2+)</name>
        <dbReference type="ChEBI" id="CHEBI:18420"/>
        <label>1</label>
    </ligand>
</feature>
<feature type="binding site" evidence="2">
    <location>
        <position position="311"/>
    </location>
    <ligand>
        <name>Mg(2+)</name>
        <dbReference type="ChEBI" id="CHEBI:18420"/>
        <label>1</label>
    </ligand>
</feature>
<feature type="binding site" evidence="2">
    <location>
        <position position="311"/>
    </location>
    <ligand>
        <name>Mg(2+)</name>
        <dbReference type="ChEBI" id="CHEBI:18420"/>
        <label>2</label>
    </ligand>
</feature>
<feature type="binding site" evidence="2">
    <location>
        <position position="313"/>
    </location>
    <ligand>
        <name>Mg(2+)</name>
        <dbReference type="ChEBI" id="CHEBI:18420"/>
        <label>2</label>
    </ligand>
</feature>
<organism>
    <name type="scientific">Lactobacillus johnsonii (strain CNCM I-12250 / La1 / NCC 533)</name>
    <dbReference type="NCBI Taxonomy" id="257314"/>
    <lineage>
        <taxon>Bacteria</taxon>
        <taxon>Bacillati</taxon>
        <taxon>Bacillota</taxon>
        <taxon>Bacilli</taxon>
        <taxon>Lactobacillales</taxon>
        <taxon>Lactobacillaceae</taxon>
        <taxon>Lactobacillus</taxon>
    </lineage>
</organism>
<evidence type="ECO:0000250" key="1"/>
<evidence type="ECO:0000255" key="2">
    <source>
        <dbReference type="HAMAP-Rule" id="MF_00047"/>
    </source>
</evidence>